<organism>
    <name type="scientific">Listeria monocytogenes serovar 1/2a (strain ATCC BAA-679 / EGD-e)</name>
    <dbReference type="NCBI Taxonomy" id="169963"/>
    <lineage>
        <taxon>Bacteria</taxon>
        <taxon>Bacillati</taxon>
        <taxon>Bacillota</taxon>
        <taxon>Bacilli</taxon>
        <taxon>Bacillales</taxon>
        <taxon>Listeriaceae</taxon>
        <taxon>Listeria</taxon>
    </lineage>
</organism>
<proteinExistence type="inferred from homology"/>
<reference key="1">
    <citation type="journal article" date="2001" name="Science">
        <title>Comparative genomics of Listeria species.</title>
        <authorList>
            <person name="Glaser P."/>
            <person name="Frangeul L."/>
            <person name="Buchrieser C."/>
            <person name="Rusniok C."/>
            <person name="Amend A."/>
            <person name="Baquero F."/>
            <person name="Berche P."/>
            <person name="Bloecker H."/>
            <person name="Brandt P."/>
            <person name="Chakraborty T."/>
            <person name="Charbit A."/>
            <person name="Chetouani F."/>
            <person name="Couve E."/>
            <person name="de Daruvar A."/>
            <person name="Dehoux P."/>
            <person name="Domann E."/>
            <person name="Dominguez-Bernal G."/>
            <person name="Duchaud E."/>
            <person name="Durant L."/>
            <person name="Dussurget O."/>
            <person name="Entian K.-D."/>
            <person name="Fsihi H."/>
            <person name="Garcia-del Portillo F."/>
            <person name="Garrido P."/>
            <person name="Gautier L."/>
            <person name="Goebel W."/>
            <person name="Gomez-Lopez N."/>
            <person name="Hain T."/>
            <person name="Hauf J."/>
            <person name="Jackson D."/>
            <person name="Jones L.-M."/>
            <person name="Kaerst U."/>
            <person name="Kreft J."/>
            <person name="Kuhn M."/>
            <person name="Kunst F."/>
            <person name="Kurapkat G."/>
            <person name="Madueno E."/>
            <person name="Maitournam A."/>
            <person name="Mata Vicente J."/>
            <person name="Ng E."/>
            <person name="Nedjari H."/>
            <person name="Nordsiek G."/>
            <person name="Novella S."/>
            <person name="de Pablos B."/>
            <person name="Perez-Diaz J.-C."/>
            <person name="Purcell R."/>
            <person name="Remmel B."/>
            <person name="Rose M."/>
            <person name="Schlueter T."/>
            <person name="Simoes N."/>
            <person name="Tierrez A."/>
            <person name="Vazquez-Boland J.-A."/>
            <person name="Voss H."/>
            <person name="Wehland J."/>
            <person name="Cossart P."/>
        </authorList>
    </citation>
    <scope>NUCLEOTIDE SEQUENCE [LARGE SCALE GENOMIC DNA]</scope>
    <source>
        <strain>ATCC BAA-679 / EGD-e</strain>
    </source>
</reference>
<sequence length="394" mass="43746">MPDKFKRVHVVVMDSVGIGEAPDAAKFGDFDVDTFGHIAKHVGGLKMPEMGKLGLSNIREIEGIKKAEKPLAYYTKMQEASNGKDTMTGHWEIMGLYIDTPFRVFPDGFPDDLINQIEEKTGRKVIGNKPASGTEIMAELGEEHVKTGALIVYTSADSVLQIAAHEDVVPLEELYEICEFCRKITLDDPYMLGRIIARPFVGEPGAFVRTPNRHDYALKPFKPTVMDALKDGGKDVIAIGKISDIFDGEGVTESIRTKSNMDGMDQFIAVLDKDFNGMSFLNLVDFDALFGHRRDPQGYADALVDFDGRLVEVMEKLTDDDLLIITADHGNDPTYTGTDHTREFVPLLVYSPRFKNGGSELELRKTFADLGATVADNFDVKMPEYGTSFLRDLK</sequence>
<dbReference type="EC" id="5.4.2.7" evidence="1"/>
<dbReference type="EMBL" id="AL591981">
    <property type="protein sequence ID" value="CAD00032.1"/>
    <property type="molecule type" value="Genomic_DNA"/>
</dbReference>
<dbReference type="PIR" id="AB1319">
    <property type="entry name" value="AB1319"/>
</dbReference>
<dbReference type="RefSeq" id="NP_465478.1">
    <property type="nucleotide sequence ID" value="NC_003210.1"/>
</dbReference>
<dbReference type="RefSeq" id="WP_003723601.1">
    <property type="nucleotide sequence ID" value="NZ_CP149495.1"/>
</dbReference>
<dbReference type="SMR" id="Q8Y5V1"/>
<dbReference type="STRING" id="169963.gene:17594639"/>
<dbReference type="PaxDb" id="169963-lmo1954"/>
<dbReference type="DNASU" id="987977"/>
<dbReference type="EnsemblBacteria" id="CAD00032">
    <property type="protein sequence ID" value="CAD00032"/>
    <property type="gene ID" value="CAD00032"/>
</dbReference>
<dbReference type="GeneID" id="987977"/>
<dbReference type="KEGG" id="lmo:lmo1954"/>
<dbReference type="PATRIC" id="fig|169963.11.peg.2001"/>
<dbReference type="eggNOG" id="COG1015">
    <property type="taxonomic scope" value="Bacteria"/>
</dbReference>
<dbReference type="HOGENOM" id="CLU_053861_0_0_9"/>
<dbReference type="OrthoDB" id="9769930at2"/>
<dbReference type="PhylomeDB" id="Q8Y5V1"/>
<dbReference type="BioCyc" id="LMON169963:LMO1954-MONOMER"/>
<dbReference type="UniPathway" id="UPA00002">
    <property type="reaction ID" value="UER00467"/>
</dbReference>
<dbReference type="Proteomes" id="UP000000817">
    <property type="component" value="Chromosome"/>
</dbReference>
<dbReference type="GO" id="GO:0005829">
    <property type="term" value="C:cytosol"/>
    <property type="evidence" value="ECO:0000318"/>
    <property type="project" value="GO_Central"/>
</dbReference>
<dbReference type="GO" id="GO:0000287">
    <property type="term" value="F:magnesium ion binding"/>
    <property type="evidence" value="ECO:0007669"/>
    <property type="project" value="InterPro"/>
</dbReference>
<dbReference type="GO" id="GO:0030145">
    <property type="term" value="F:manganese ion binding"/>
    <property type="evidence" value="ECO:0007669"/>
    <property type="project" value="UniProtKB-UniRule"/>
</dbReference>
<dbReference type="GO" id="GO:0008973">
    <property type="term" value="F:phosphopentomutase activity"/>
    <property type="evidence" value="ECO:0000318"/>
    <property type="project" value="GO_Central"/>
</dbReference>
<dbReference type="GO" id="GO:0006018">
    <property type="term" value="P:2-deoxyribose 1-phosphate catabolic process"/>
    <property type="evidence" value="ECO:0007669"/>
    <property type="project" value="UniProtKB-UniRule"/>
</dbReference>
<dbReference type="GO" id="GO:0006015">
    <property type="term" value="P:5-phosphoribose 1-diphosphate biosynthetic process"/>
    <property type="evidence" value="ECO:0007669"/>
    <property type="project" value="UniProtKB-UniPathway"/>
</dbReference>
<dbReference type="GO" id="GO:0043094">
    <property type="term" value="P:metabolic compound salvage"/>
    <property type="evidence" value="ECO:0007669"/>
    <property type="project" value="InterPro"/>
</dbReference>
<dbReference type="GO" id="GO:0009117">
    <property type="term" value="P:nucleotide metabolic process"/>
    <property type="evidence" value="ECO:0007669"/>
    <property type="project" value="InterPro"/>
</dbReference>
<dbReference type="CDD" id="cd16009">
    <property type="entry name" value="PPM"/>
    <property type="match status" value="1"/>
</dbReference>
<dbReference type="FunFam" id="3.30.70.1250:FF:000001">
    <property type="entry name" value="Phosphopentomutase"/>
    <property type="match status" value="1"/>
</dbReference>
<dbReference type="Gene3D" id="3.40.720.10">
    <property type="entry name" value="Alkaline Phosphatase, subunit A"/>
    <property type="match status" value="1"/>
</dbReference>
<dbReference type="Gene3D" id="3.30.70.1250">
    <property type="entry name" value="Phosphopentomutase"/>
    <property type="match status" value="1"/>
</dbReference>
<dbReference type="HAMAP" id="MF_00740">
    <property type="entry name" value="Phosphopentomut"/>
    <property type="match status" value="1"/>
</dbReference>
<dbReference type="InterPro" id="IPR017850">
    <property type="entry name" value="Alkaline_phosphatase_core_sf"/>
</dbReference>
<dbReference type="InterPro" id="IPR010045">
    <property type="entry name" value="DeoB"/>
</dbReference>
<dbReference type="InterPro" id="IPR006124">
    <property type="entry name" value="Metalloenzyme"/>
</dbReference>
<dbReference type="InterPro" id="IPR024052">
    <property type="entry name" value="Phosphopentomutase_DeoB_cap_sf"/>
</dbReference>
<dbReference type="NCBIfam" id="TIGR01696">
    <property type="entry name" value="deoB"/>
    <property type="match status" value="1"/>
</dbReference>
<dbReference type="NCBIfam" id="NF003766">
    <property type="entry name" value="PRK05362.1"/>
    <property type="match status" value="1"/>
</dbReference>
<dbReference type="PANTHER" id="PTHR21110">
    <property type="entry name" value="PHOSPHOPENTOMUTASE"/>
    <property type="match status" value="1"/>
</dbReference>
<dbReference type="PANTHER" id="PTHR21110:SF0">
    <property type="entry name" value="PHOSPHOPENTOMUTASE"/>
    <property type="match status" value="1"/>
</dbReference>
<dbReference type="Pfam" id="PF01676">
    <property type="entry name" value="Metalloenzyme"/>
    <property type="match status" value="1"/>
</dbReference>
<dbReference type="PIRSF" id="PIRSF001491">
    <property type="entry name" value="Ppentomutase"/>
    <property type="match status" value="1"/>
</dbReference>
<dbReference type="SUPFAM" id="SSF53649">
    <property type="entry name" value="Alkaline phosphatase-like"/>
    <property type="match status" value="1"/>
</dbReference>
<dbReference type="SUPFAM" id="SSF143856">
    <property type="entry name" value="DeoB insert domain-like"/>
    <property type="match status" value="1"/>
</dbReference>
<accession>Q8Y5V1</accession>
<feature type="chain" id="PRO_0000199829" description="Phosphopentomutase">
    <location>
        <begin position="1"/>
        <end position="394"/>
    </location>
</feature>
<feature type="binding site" evidence="1">
    <location>
        <position position="14"/>
    </location>
    <ligand>
        <name>Mn(2+)</name>
        <dbReference type="ChEBI" id="CHEBI:29035"/>
        <label>1</label>
    </ligand>
</feature>
<feature type="binding site" evidence="1">
    <location>
        <position position="287"/>
    </location>
    <ligand>
        <name>Mn(2+)</name>
        <dbReference type="ChEBI" id="CHEBI:29035"/>
        <label>2</label>
    </ligand>
</feature>
<feature type="binding site" evidence="1">
    <location>
        <position position="292"/>
    </location>
    <ligand>
        <name>Mn(2+)</name>
        <dbReference type="ChEBI" id="CHEBI:29035"/>
        <label>2</label>
    </ligand>
</feature>
<feature type="binding site" evidence="1">
    <location>
        <position position="328"/>
    </location>
    <ligand>
        <name>Mn(2+)</name>
        <dbReference type="ChEBI" id="CHEBI:29035"/>
        <label>1</label>
    </ligand>
</feature>
<feature type="binding site" evidence="1">
    <location>
        <position position="329"/>
    </location>
    <ligand>
        <name>Mn(2+)</name>
        <dbReference type="ChEBI" id="CHEBI:29035"/>
        <label>1</label>
    </ligand>
</feature>
<feature type="binding site" evidence="1">
    <location>
        <position position="340"/>
    </location>
    <ligand>
        <name>Mn(2+)</name>
        <dbReference type="ChEBI" id="CHEBI:29035"/>
        <label>2</label>
    </ligand>
</feature>
<protein>
    <recommendedName>
        <fullName evidence="1">Phosphopentomutase</fullName>
        <ecNumber evidence="1">5.4.2.7</ecNumber>
    </recommendedName>
    <alternativeName>
        <fullName evidence="1">Phosphodeoxyribomutase</fullName>
    </alternativeName>
</protein>
<keyword id="KW-0963">Cytoplasm</keyword>
<keyword id="KW-0413">Isomerase</keyword>
<keyword id="KW-0464">Manganese</keyword>
<keyword id="KW-0479">Metal-binding</keyword>
<keyword id="KW-1185">Reference proteome</keyword>
<comment type="function">
    <text evidence="1">Isomerase that catalyzes the conversion of deoxy-ribose 1-phosphate (dRib-1-P) and ribose 1-phosphate (Rib-1-P) to deoxy-ribose 5-phosphate (dRib-5-P) and ribose 5-phosphate (Rib-5-P), respectively.</text>
</comment>
<comment type="catalytic activity">
    <reaction evidence="1">
        <text>2-deoxy-alpha-D-ribose 1-phosphate = 2-deoxy-D-ribose 5-phosphate</text>
        <dbReference type="Rhea" id="RHEA:27658"/>
        <dbReference type="ChEBI" id="CHEBI:57259"/>
        <dbReference type="ChEBI" id="CHEBI:62877"/>
        <dbReference type="EC" id="5.4.2.7"/>
    </reaction>
</comment>
<comment type="catalytic activity">
    <reaction evidence="1">
        <text>alpha-D-ribose 1-phosphate = D-ribose 5-phosphate</text>
        <dbReference type="Rhea" id="RHEA:18793"/>
        <dbReference type="ChEBI" id="CHEBI:57720"/>
        <dbReference type="ChEBI" id="CHEBI:78346"/>
        <dbReference type="EC" id="5.4.2.7"/>
    </reaction>
</comment>
<comment type="cofactor">
    <cofactor evidence="1">
        <name>Mn(2+)</name>
        <dbReference type="ChEBI" id="CHEBI:29035"/>
    </cofactor>
    <text evidence="1">Binds 2 manganese ions.</text>
</comment>
<comment type="pathway">
    <text evidence="1">Carbohydrate degradation; 2-deoxy-D-ribose 1-phosphate degradation; D-glyceraldehyde 3-phosphate and acetaldehyde from 2-deoxy-alpha-D-ribose 1-phosphate: step 1/2.</text>
</comment>
<comment type="subcellular location">
    <subcellularLocation>
        <location evidence="1">Cytoplasm</location>
    </subcellularLocation>
</comment>
<comment type="similarity">
    <text evidence="1">Belongs to the phosphopentomutase family.</text>
</comment>
<name>DEOB_LISMO</name>
<gene>
    <name evidence="1" type="primary">deoB</name>
    <name type="synonym">drm</name>
    <name type="ordered locus">lmo1954</name>
</gene>
<evidence type="ECO:0000255" key="1">
    <source>
        <dbReference type="HAMAP-Rule" id="MF_00740"/>
    </source>
</evidence>